<evidence type="ECO:0000255" key="1">
    <source>
        <dbReference type="HAMAP-Rule" id="MF_00456"/>
    </source>
</evidence>
<organism>
    <name type="scientific">Streptococcus equi subsp. zooepidemicus (strain MGCS10565)</name>
    <dbReference type="NCBI Taxonomy" id="552526"/>
    <lineage>
        <taxon>Bacteria</taxon>
        <taxon>Bacillati</taxon>
        <taxon>Bacillota</taxon>
        <taxon>Bacilli</taxon>
        <taxon>Lactobacillales</taxon>
        <taxon>Streptococcaceae</taxon>
        <taxon>Streptococcus</taxon>
    </lineage>
</organism>
<sequence length="272" mass="29805">MMKRQFEDVKRIVIKIGTSSLVLANGKINLEKIDHLAFVISSLMNKGKEVILVSSGAMGFGLDLLKMAKRPSQLAKQQAVSSVGQVAMMSLYSQIFAHYQTTVSQILLTRDVVVFPESLANVTNAFESLISLGIVPIVNENDAVSVDEMDHSTKFGDNDRLSAIVARITRADLLIMLSDIDGLFDKNPTIYEDARLRSHVTEITEDIIASAGGAGSRFGTGGMLSKIQSAQMMFEHQGQMILMNGANPRDILRVLEGEKLGTWFKQIERGDA</sequence>
<dbReference type="EC" id="2.7.2.11" evidence="1"/>
<dbReference type="EMBL" id="CP001129">
    <property type="protein sequence ID" value="ACG62924.1"/>
    <property type="molecule type" value="Genomic_DNA"/>
</dbReference>
<dbReference type="RefSeq" id="WP_012516180.1">
    <property type="nucleotide sequence ID" value="NC_011134.1"/>
</dbReference>
<dbReference type="SMR" id="B4U4K7"/>
<dbReference type="KEGG" id="sez:Sez_1591"/>
<dbReference type="HOGENOM" id="CLU_025400_0_2_9"/>
<dbReference type="UniPathway" id="UPA00098">
    <property type="reaction ID" value="UER00359"/>
</dbReference>
<dbReference type="Proteomes" id="UP000001873">
    <property type="component" value="Chromosome"/>
</dbReference>
<dbReference type="GO" id="GO:0005829">
    <property type="term" value="C:cytosol"/>
    <property type="evidence" value="ECO:0007669"/>
    <property type="project" value="TreeGrafter"/>
</dbReference>
<dbReference type="GO" id="GO:0005524">
    <property type="term" value="F:ATP binding"/>
    <property type="evidence" value="ECO:0007669"/>
    <property type="project" value="UniProtKB-KW"/>
</dbReference>
<dbReference type="GO" id="GO:0004349">
    <property type="term" value="F:glutamate 5-kinase activity"/>
    <property type="evidence" value="ECO:0007669"/>
    <property type="project" value="UniProtKB-UniRule"/>
</dbReference>
<dbReference type="GO" id="GO:0055129">
    <property type="term" value="P:L-proline biosynthetic process"/>
    <property type="evidence" value="ECO:0007669"/>
    <property type="project" value="UniProtKB-UniRule"/>
</dbReference>
<dbReference type="CDD" id="cd04242">
    <property type="entry name" value="AAK_G5K_ProB"/>
    <property type="match status" value="1"/>
</dbReference>
<dbReference type="FunFam" id="3.40.1160.10:FF:000006">
    <property type="entry name" value="Glutamate 5-kinase"/>
    <property type="match status" value="1"/>
</dbReference>
<dbReference type="Gene3D" id="3.40.1160.10">
    <property type="entry name" value="Acetylglutamate kinase-like"/>
    <property type="match status" value="1"/>
</dbReference>
<dbReference type="HAMAP" id="MF_00456">
    <property type="entry name" value="ProB"/>
    <property type="match status" value="1"/>
</dbReference>
<dbReference type="InterPro" id="IPR036393">
    <property type="entry name" value="AceGlu_kinase-like_sf"/>
</dbReference>
<dbReference type="InterPro" id="IPR001048">
    <property type="entry name" value="Asp/Glu/Uridylate_kinase"/>
</dbReference>
<dbReference type="InterPro" id="IPR041739">
    <property type="entry name" value="G5K_ProB"/>
</dbReference>
<dbReference type="InterPro" id="IPR001057">
    <property type="entry name" value="Glu/AcGlu_kinase"/>
</dbReference>
<dbReference type="InterPro" id="IPR011529">
    <property type="entry name" value="Glu_5kinase"/>
</dbReference>
<dbReference type="InterPro" id="IPR005715">
    <property type="entry name" value="Glu_5kinase/COase_Synthase"/>
</dbReference>
<dbReference type="InterPro" id="IPR019797">
    <property type="entry name" value="Glutamate_5-kinase_CS"/>
</dbReference>
<dbReference type="NCBIfam" id="TIGR01027">
    <property type="entry name" value="proB"/>
    <property type="match status" value="1"/>
</dbReference>
<dbReference type="PANTHER" id="PTHR43654">
    <property type="entry name" value="GLUTAMATE 5-KINASE"/>
    <property type="match status" value="1"/>
</dbReference>
<dbReference type="PANTHER" id="PTHR43654:SF1">
    <property type="entry name" value="ISOPENTENYL PHOSPHATE KINASE"/>
    <property type="match status" value="1"/>
</dbReference>
<dbReference type="Pfam" id="PF00696">
    <property type="entry name" value="AA_kinase"/>
    <property type="match status" value="1"/>
</dbReference>
<dbReference type="PIRSF" id="PIRSF000729">
    <property type="entry name" value="GK"/>
    <property type="match status" value="1"/>
</dbReference>
<dbReference type="PRINTS" id="PR00474">
    <property type="entry name" value="GLU5KINASE"/>
</dbReference>
<dbReference type="SUPFAM" id="SSF53633">
    <property type="entry name" value="Carbamate kinase-like"/>
    <property type="match status" value="1"/>
</dbReference>
<dbReference type="PROSITE" id="PS00902">
    <property type="entry name" value="GLUTAMATE_5_KINASE"/>
    <property type="match status" value="1"/>
</dbReference>
<gene>
    <name evidence="1" type="primary">proB</name>
    <name type="ordered locus">Sez_1591</name>
</gene>
<accession>B4U4K7</accession>
<proteinExistence type="inferred from homology"/>
<keyword id="KW-0028">Amino-acid biosynthesis</keyword>
<keyword id="KW-0067">ATP-binding</keyword>
<keyword id="KW-0963">Cytoplasm</keyword>
<keyword id="KW-0418">Kinase</keyword>
<keyword id="KW-0547">Nucleotide-binding</keyword>
<keyword id="KW-0641">Proline biosynthesis</keyword>
<keyword id="KW-0808">Transferase</keyword>
<name>PROB_STREM</name>
<protein>
    <recommendedName>
        <fullName evidence="1">Glutamate 5-kinase</fullName>
        <ecNumber evidence="1">2.7.2.11</ecNumber>
    </recommendedName>
    <alternativeName>
        <fullName evidence="1">Gamma-glutamyl kinase</fullName>
        <shortName evidence="1">GK</shortName>
    </alternativeName>
</protein>
<reference key="1">
    <citation type="journal article" date="2008" name="PLoS ONE">
        <title>Genome sequence of a lancefield group C Streptococcus zooepidemicus strain causing epidemic nephritis: new information about an old disease.</title>
        <authorList>
            <person name="Beres S.B."/>
            <person name="Sesso R."/>
            <person name="Pinto S.W.L."/>
            <person name="Hoe N.P."/>
            <person name="Porcella S.F."/>
            <person name="Deleo F.R."/>
            <person name="Musser J.M."/>
        </authorList>
    </citation>
    <scope>NUCLEOTIDE SEQUENCE [LARGE SCALE GENOMIC DNA]</scope>
    <source>
        <strain>MGCS10565</strain>
    </source>
</reference>
<feature type="chain" id="PRO_1000125266" description="Glutamate 5-kinase">
    <location>
        <begin position="1"/>
        <end position="272"/>
    </location>
</feature>
<feature type="binding site" evidence="1">
    <location>
        <position position="15"/>
    </location>
    <ligand>
        <name>ATP</name>
        <dbReference type="ChEBI" id="CHEBI:30616"/>
    </ligand>
</feature>
<feature type="binding site" evidence="1">
    <location>
        <position position="55"/>
    </location>
    <ligand>
        <name>substrate</name>
    </ligand>
</feature>
<feature type="binding site" evidence="1">
    <location>
        <position position="142"/>
    </location>
    <ligand>
        <name>substrate</name>
    </ligand>
</feature>
<feature type="binding site" evidence="1">
    <location>
        <position position="158"/>
    </location>
    <ligand>
        <name>substrate</name>
    </ligand>
</feature>
<feature type="binding site" evidence="1">
    <location>
        <begin position="178"/>
        <end position="179"/>
    </location>
    <ligand>
        <name>ATP</name>
        <dbReference type="ChEBI" id="CHEBI:30616"/>
    </ligand>
</feature>
<feature type="binding site" evidence="1">
    <location>
        <begin position="220"/>
        <end position="226"/>
    </location>
    <ligand>
        <name>ATP</name>
        <dbReference type="ChEBI" id="CHEBI:30616"/>
    </ligand>
</feature>
<comment type="function">
    <text evidence="1">Catalyzes the transfer of a phosphate group to glutamate to form L-glutamate 5-phosphate.</text>
</comment>
<comment type="catalytic activity">
    <reaction evidence="1">
        <text>L-glutamate + ATP = L-glutamyl 5-phosphate + ADP</text>
        <dbReference type="Rhea" id="RHEA:14877"/>
        <dbReference type="ChEBI" id="CHEBI:29985"/>
        <dbReference type="ChEBI" id="CHEBI:30616"/>
        <dbReference type="ChEBI" id="CHEBI:58274"/>
        <dbReference type="ChEBI" id="CHEBI:456216"/>
        <dbReference type="EC" id="2.7.2.11"/>
    </reaction>
</comment>
<comment type="pathway">
    <text evidence="1">Amino-acid biosynthesis; L-proline biosynthesis; L-glutamate 5-semialdehyde from L-glutamate: step 1/2.</text>
</comment>
<comment type="subcellular location">
    <subcellularLocation>
        <location evidence="1">Cytoplasm</location>
    </subcellularLocation>
</comment>
<comment type="similarity">
    <text evidence="1">Belongs to the glutamate 5-kinase family.</text>
</comment>